<organism>
    <name type="scientific">Xylella fastidiosa (strain M23)</name>
    <dbReference type="NCBI Taxonomy" id="405441"/>
    <lineage>
        <taxon>Bacteria</taxon>
        <taxon>Pseudomonadati</taxon>
        <taxon>Pseudomonadota</taxon>
        <taxon>Gammaproteobacteria</taxon>
        <taxon>Lysobacterales</taxon>
        <taxon>Lysobacteraceae</taxon>
        <taxon>Xylella</taxon>
    </lineage>
</organism>
<name>SST_XYLF2</name>
<keyword id="KW-0012">Acyltransferase</keyword>
<keyword id="KW-0028">Amino-acid biosynthesis</keyword>
<keyword id="KW-0198">Cysteine biosynthesis</keyword>
<keyword id="KW-0963">Cytoplasm</keyword>
<keyword id="KW-0808">Transferase</keyword>
<gene>
    <name type="primary">metX</name>
    <name type="ordered locus">XfasM23_1569</name>
</gene>
<feature type="chain" id="PRO_1000115238" description="Serine O-succinyltransferase">
    <location>
        <begin position="1"/>
        <end position="370"/>
    </location>
</feature>
<feature type="domain" description="AB hydrolase-1" evidence="1">
    <location>
        <begin position="45"/>
        <end position="354"/>
    </location>
</feature>
<feature type="region of interest" description="Important for substrate specificity" evidence="1">
    <location>
        <begin position="52"/>
        <end position="55"/>
    </location>
</feature>
<feature type="active site" description="Nucleophile" evidence="1">
    <location>
        <position position="149"/>
    </location>
</feature>
<feature type="active site" evidence="1">
    <location>
        <position position="316"/>
    </location>
</feature>
<feature type="active site" evidence="1">
    <location>
        <position position="349"/>
    </location>
</feature>
<feature type="binding site" evidence="1">
    <location>
        <position position="218"/>
    </location>
    <ligand>
        <name>substrate</name>
    </ligand>
</feature>
<feature type="binding site" evidence="1">
    <location>
        <position position="350"/>
    </location>
    <ligand>
        <name>substrate</name>
    </ligand>
</feature>
<feature type="site" description="Important for acyl-CoA specificity" evidence="1">
    <location>
        <position position="186"/>
    </location>
</feature>
<sequence>MTEFIPPGSLFHALSSPFAMKRGGQLHHARIAYETWGRLNAGATNAILIMPGLSPNAHAAHHDSNAEPGWWESMLGPGKPIDTDRWFVICVNSLGSCKGSTGPASYNPITQAMYRLDFPALSIEDGANAAIEVVHALGIKQLASLIGNSMGGMTALAILLLHPDIARSHINISGSAQALPFSIAIRSLQREAIRLDPHWKQGHYDDTHYPESGLRIARKLGVITYRSALEWDGRFGRVRLDSDQTNDTPFGLEFQIENYLESHAHRFVHTFDPNCYLYLSRSMDWFDVAEYANGDIIAGLARIRIQRALAIGSHTDILFPIQQQQQIAEGLRRGGTHATFLGLDSPQGHDAFLVDIAGFGPPVKEFLDEL</sequence>
<proteinExistence type="inferred from homology"/>
<dbReference type="EC" id="2.3.1.-" evidence="1"/>
<dbReference type="EMBL" id="CP001011">
    <property type="protein sequence ID" value="ACB92977.1"/>
    <property type="molecule type" value="Genomic_DNA"/>
</dbReference>
<dbReference type="RefSeq" id="WP_004088494.1">
    <property type="nucleotide sequence ID" value="NC_010577.1"/>
</dbReference>
<dbReference type="SMR" id="B2I700"/>
<dbReference type="ESTHER" id="xylfa-metx">
    <property type="family name" value="Homoserine_transacetylase"/>
</dbReference>
<dbReference type="KEGG" id="xfn:XfasM23_1569"/>
<dbReference type="HOGENOM" id="CLU_028760_1_2_6"/>
<dbReference type="UniPathway" id="UPA00136">
    <property type="reaction ID" value="UER00199"/>
</dbReference>
<dbReference type="Proteomes" id="UP000001698">
    <property type="component" value="Chromosome"/>
</dbReference>
<dbReference type="GO" id="GO:0005737">
    <property type="term" value="C:cytoplasm"/>
    <property type="evidence" value="ECO:0007669"/>
    <property type="project" value="UniProtKB-SubCell"/>
</dbReference>
<dbReference type="GO" id="GO:0004414">
    <property type="term" value="F:homoserine O-acetyltransferase activity"/>
    <property type="evidence" value="ECO:0007669"/>
    <property type="project" value="TreeGrafter"/>
</dbReference>
<dbReference type="GO" id="GO:0160210">
    <property type="term" value="F:L-serine O-succinyltransferase activity"/>
    <property type="evidence" value="ECO:0007669"/>
    <property type="project" value="RHEA"/>
</dbReference>
<dbReference type="GO" id="GO:0006535">
    <property type="term" value="P:cysteine biosynthetic process from serine"/>
    <property type="evidence" value="ECO:0007669"/>
    <property type="project" value="UniProtKB-UniRule"/>
</dbReference>
<dbReference type="GO" id="GO:0009092">
    <property type="term" value="P:homoserine metabolic process"/>
    <property type="evidence" value="ECO:0007669"/>
    <property type="project" value="TreeGrafter"/>
</dbReference>
<dbReference type="GO" id="GO:0009086">
    <property type="term" value="P:methionine biosynthetic process"/>
    <property type="evidence" value="ECO:0007669"/>
    <property type="project" value="TreeGrafter"/>
</dbReference>
<dbReference type="Gene3D" id="1.10.1740.110">
    <property type="match status" value="1"/>
</dbReference>
<dbReference type="Gene3D" id="3.40.50.1820">
    <property type="entry name" value="alpha/beta hydrolase"/>
    <property type="match status" value="1"/>
</dbReference>
<dbReference type="HAMAP" id="MF_00296">
    <property type="entry name" value="MetX_acyltransf"/>
    <property type="match status" value="1"/>
</dbReference>
<dbReference type="InterPro" id="IPR000073">
    <property type="entry name" value="AB_hydrolase_1"/>
</dbReference>
<dbReference type="InterPro" id="IPR029058">
    <property type="entry name" value="AB_hydrolase_fold"/>
</dbReference>
<dbReference type="InterPro" id="IPR008220">
    <property type="entry name" value="HAT_MetX-like"/>
</dbReference>
<dbReference type="NCBIfam" id="TIGR01392">
    <property type="entry name" value="homoserO_Ac_trn"/>
    <property type="match status" value="1"/>
</dbReference>
<dbReference type="NCBIfam" id="NF001209">
    <property type="entry name" value="PRK00175.1"/>
    <property type="match status" value="1"/>
</dbReference>
<dbReference type="PANTHER" id="PTHR32268">
    <property type="entry name" value="HOMOSERINE O-ACETYLTRANSFERASE"/>
    <property type="match status" value="1"/>
</dbReference>
<dbReference type="PANTHER" id="PTHR32268:SF11">
    <property type="entry name" value="HOMOSERINE O-ACETYLTRANSFERASE"/>
    <property type="match status" value="1"/>
</dbReference>
<dbReference type="Pfam" id="PF00561">
    <property type="entry name" value="Abhydrolase_1"/>
    <property type="match status" value="1"/>
</dbReference>
<dbReference type="PIRSF" id="PIRSF000443">
    <property type="entry name" value="Homoser_Ac_trans"/>
    <property type="match status" value="1"/>
</dbReference>
<dbReference type="SUPFAM" id="SSF53474">
    <property type="entry name" value="alpha/beta-Hydrolases"/>
    <property type="match status" value="1"/>
</dbReference>
<evidence type="ECO:0000255" key="1">
    <source>
        <dbReference type="HAMAP-Rule" id="MF_00296"/>
    </source>
</evidence>
<comment type="function">
    <text evidence="1">Transfers a succinyl group from succinyl-CoA to L-serine, forming succinyl-L-serine.</text>
</comment>
<comment type="catalytic activity">
    <reaction evidence="1">
        <text>succinyl-CoA + L-serine = O-succinyl-L-serine + CoA</text>
        <dbReference type="Rhea" id="RHEA:52820"/>
        <dbReference type="ChEBI" id="CHEBI:33384"/>
        <dbReference type="ChEBI" id="CHEBI:57287"/>
        <dbReference type="ChEBI" id="CHEBI:57292"/>
        <dbReference type="ChEBI" id="CHEBI:136856"/>
    </reaction>
</comment>
<comment type="pathway">
    <text evidence="1">Amino-acid biosynthesis; L-cysteine biosynthesis; L-cysteine from L-serine: step 1/2.</text>
</comment>
<comment type="subunit">
    <text evidence="1">Homodimer.</text>
</comment>
<comment type="subcellular location">
    <subcellularLocation>
        <location evidence="1">Cytoplasm</location>
    </subcellularLocation>
</comment>
<comment type="similarity">
    <text evidence="1">Belongs to the AB hydrolase superfamily. MetX family.</text>
</comment>
<accession>B2I700</accession>
<reference key="1">
    <citation type="journal article" date="2010" name="J. Bacteriol.">
        <title>Whole genome sequences of two Xylella fastidiosa strains (M12 and M23) causing almond leaf scorch disease in California.</title>
        <authorList>
            <person name="Chen J."/>
            <person name="Xie G."/>
            <person name="Han S."/>
            <person name="Chertkov O."/>
            <person name="Sims D."/>
            <person name="Civerolo E.L."/>
        </authorList>
    </citation>
    <scope>NUCLEOTIDE SEQUENCE [LARGE SCALE GENOMIC DNA]</scope>
    <source>
        <strain>M23</strain>
    </source>
</reference>
<protein>
    <recommendedName>
        <fullName evidence="1">Serine O-succinyltransferase</fullName>
        <shortName evidence="1">SST</shortName>
        <ecNumber evidence="1">2.3.1.-</ecNumber>
    </recommendedName>
</protein>